<proteinExistence type="inferred from homology"/>
<reference key="1">
    <citation type="submission" date="1994-03" db="EMBL/GenBank/DDBJ databases">
        <authorList>
            <person name="Okuley J.J."/>
            <person name="Sims T.L."/>
        </authorList>
    </citation>
    <scope>NUCLEOTIDE SEQUENCE [GENOMIC DNA]</scope>
</reference>
<name>RNS3_PETHY</name>
<feature type="signal peptide" evidence="4">
    <location>
        <begin position="1"/>
        <end position="22"/>
    </location>
</feature>
<feature type="chain" id="PRO_0000030976" description="Ribonuclease S-3">
    <location>
        <begin position="23"/>
        <end position="222"/>
    </location>
</feature>
<feature type="active site" description="Proton donor" evidence="3 6">
    <location>
        <position position="54"/>
    </location>
</feature>
<feature type="active site" evidence="1">
    <location>
        <position position="110"/>
    </location>
</feature>
<feature type="active site" description="Proton acceptor" evidence="3 6">
    <location>
        <position position="114"/>
    </location>
</feature>
<feature type="binding site" evidence="2">
    <location>
        <position position="54"/>
    </location>
    <ligand>
        <name>RNA</name>
        <dbReference type="ChEBI" id="CHEBI:33697"/>
    </ligand>
    <ligandPart>
        <name>a 3'-terminal ribonucleotide 3'-phosphate residue</name>
        <dbReference type="ChEBI" id="CHEBI:83062"/>
    </ligandPart>
</feature>
<feature type="binding site" evidence="2">
    <location>
        <begin position="92"/>
        <end position="93"/>
    </location>
    <ligand>
        <name>RNA</name>
        <dbReference type="ChEBI" id="CHEBI:33697"/>
    </ligand>
    <ligandPart>
        <name>a 3'-terminal ribonucleotide 3'-phosphate residue</name>
        <dbReference type="ChEBI" id="CHEBI:83062"/>
    </ligandPart>
</feature>
<feature type="binding site" evidence="2">
    <location>
        <begin position="109"/>
        <end position="110"/>
    </location>
    <ligand>
        <name>RNA</name>
        <dbReference type="ChEBI" id="CHEBI:33697"/>
    </ligand>
    <ligandPart>
        <name>a 3'-terminal ribonucleotide 3'-phosphate residue</name>
        <dbReference type="ChEBI" id="CHEBI:83062"/>
    </ligandPart>
</feature>
<feature type="binding site" evidence="2">
    <location>
        <begin position="113"/>
        <end position="114"/>
    </location>
    <ligand>
        <name>RNA</name>
        <dbReference type="ChEBI" id="CHEBI:33697"/>
    </ligand>
    <ligandPart>
        <name>a 3'-terminal ribonucleotide 3'-phosphate residue</name>
        <dbReference type="ChEBI" id="CHEBI:83062"/>
    </ligandPart>
</feature>
<feature type="glycosylation site" description="N-linked (GlcNAc...) asparagine" evidence="5">
    <location>
        <position position="50"/>
    </location>
</feature>
<feature type="disulfide bond" evidence="3">
    <location>
        <begin position="38"/>
        <end position="44"/>
    </location>
</feature>
<feature type="disulfide bond" evidence="1">
    <location>
        <begin position="68"/>
        <end position="117"/>
    </location>
</feature>
<feature type="disulfide bond" evidence="1">
    <location>
        <begin position="177"/>
        <end position="210"/>
    </location>
</feature>
<feature type="disulfide bond" evidence="2">
    <location>
        <begin position="193"/>
        <end position="204"/>
    </location>
</feature>
<accession>Q40875</accession>
<protein>
    <recommendedName>
        <fullName>Ribonuclease S-3</fullName>
        <ecNumber evidence="7">4.6.1.19</ecNumber>
    </recommendedName>
    <alternativeName>
        <fullName>S3-RNase</fullName>
    </alternativeName>
    <alternativeName>
        <fullName>Stylar glycoprotein 3</fullName>
    </alternativeName>
</protein>
<organism>
    <name type="scientific">Petunia hybrida</name>
    <name type="common">Petunia</name>
    <dbReference type="NCBI Taxonomy" id="4102"/>
    <lineage>
        <taxon>Eukaryota</taxon>
        <taxon>Viridiplantae</taxon>
        <taxon>Streptophyta</taxon>
        <taxon>Embryophyta</taxon>
        <taxon>Tracheophyta</taxon>
        <taxon>Spermatophyta</taxon>
        <taxon>Magnoliopsida</taxon>
        <taxon>eudicotyledons</taxon>
        <taxon>Gunneridae</taxon>
        <taxon>Pentapetalae</taxon>
        <taxon>asterids</taxon>
        <taxon>lamiids</taxon>
        <taxon>Solanales</taxon>
        <taxon>Solanaceae</taxon>
        <taxon>Petunioideae</taxon>
        <taxon>Petunia</taxon>
    </lineage>
</organism>
<sequence length="222" mass="26213">MFRLQLISAFFILLFSLSPVSANFDYFQLVLTWPASFCYPKNKCQRRSNNFTIHGLWPEKKRFRLEFCTGDKYKRFLEEDNIINVLERHWIQMRFDETYANTKQPLWEHEYNRHGICCKNLYDQKAYFLLAMRLKDKLDLLTTLRTHGITPGTKHTFGEIQKAIKTVTSNNDPDLKCVENIKGVMELNEIGICYTPAADRFDRCRHSNTCDETSSTKILFRG</sequence>
<dbReference type="EC" id="4.6.1.19" evidence="7"/>
<dbReference type="EMBL" id="U07363">
    <property type="protein sequence ID" value="AAA60466.1"/>
    <property type="molecule type" value="Genomic_DNA"/>
</dbReference>
<dbReference type="PIR" id="JQ1076">
    <property type="entry name" value="JQ1076"/>
</dbReference>
<dbReference type="SMR" id="Q40875"/>
<dbReference type="GlyCosmos" id="Q40875">
    <property type="glycosylation" value="1 site, No reported glycans"/>
</dbReference>
<dbReference type="GO" id="GO:0005576">
    <property type="term" value="C:extracellular region"/>
    <property type="evidence" value="ECO:0007669"/>
    <property type="project" value="UniProtKB-SubCell"/>
</dbReference>
<dbReference type="GO" id="GO:0033897">
    <property type="term" value="F:ribonuclease T2 activity"/>
    <property type="evidence" value="ECO:0007669"/>
    <property type="project" value="UniProtKB-EC"/>
</dbReference>
<dbReference type="GO" id="GO:0003723">
    <property type="term" value="F:RNA binding"/>
    <property type="evidence" value="ECO:0007669"/>
    <property type="project" value="InterPro"/>
</dbReference>
<dbReference type="GO" id="GO:0006401">
    <property type="term" value="P:RNA catabolic process"/>
    <property type="evidence" value="ECO:0007669"/>
    <property type="project" value="TreeGrafter"/>
</dbReference>
<dbReference type="CDD" id="cd01061">
    <property type="entry name" value="RNase_T2_euk"/>
    <property type="match status" value="1"/>
</dbReference>
<dbReference type="Gene3D" id="3.90.730.10">
    <property type="entry name" value="Ribonuclease T2-like"/>
    <property type="match status" value="1"/>
</dbReference>
<dbReference type="InterPro" id="IPR033697">
    <property type="entry name" value="Ribonuclease_T2_eukaryotic"/>
</dbReference>
<dbReference type="InterPro" id="IPR001568">
    <property type="entry name" value="RNase_T2-like"/>
</dbReference>
<dbReference type="InterPro" id="IPR036430">
    <property type="entry name" value="RNase_T2-like_sf"/>
</dbReference>
<dbReference type="InterPro" id="IPR018188">
    <property type="entry name" value="RNase_T2_His_AS_1"/>
</dbReference>
<dbReference type="InterPro" id="IPR033130">
    <property type="entry name" value="RNase_T2_His_AS_2"/>
</dbReference>
<dbReference type="PANTHER" id="PTHR11240:SF81">
    <property type="entry name" value="RIBONUCLEASE S-2"/>
    <property type="match status" value="1"/>
</dbReference>
<dbReference type="PANTHER" id="PTHR11240">
    <property type="entry name" value="RIBONUCLEASE T2"/>
    <property type="match status" value="1"/>
</dbReference>
<dbReference type="Pfam" id="PF00445">
    <property type="entry name" value="Ribonuclease_T2"/>
    <property type="match status" value="1"/>
</dbReference>
<dbReference type="SUPFAM" id="SSF55895">
    <property type="entry name" value="Ribonuclease Rh-like"/>
    <property type="match status" value="1"/>
</dbReference>
<dbReference type="PROSITE" id="PS00530">
    <property type="entry name" value="RNASE_T2_1"/>
    <property type="match status" value="1"/>
</dbReference>
<dbReference type="PROSITE" id="PS00531">
    <property type="entry name" value="RNASE_T2_2"/>
    <property type="match status" value="1"/>
</dbReference>
<keyword id="KW-1015">Disulfide bond</keyword>
<keyword id="KW-0255">Endonuclease</keyword>
<keyword id="KW-0325">Glycoprotein</keyword>
<keyword id="KW-0378">Hydrolase</keyword>
<keyword id="KW-0456">Lyase</keyword>
<keyword id="KW-0540">Nuclease</keyword>
<keyword id="KW-0964">Secreted</keyword>
<keyword id="KW-0732">Signal</keyword>
<evidence type="ECO:0000250" key="1">
    <source>
        <dbReference type="UniProtKB" id="P08056"/>
    </source>
</evidence>
<evidence type="ECO:0000250" key="2">
    <source>
        <dbReference type="UniProtKB" id="P23540"/>
    </source>
</evidence>
<evidence type="ECO:0000250" key="3">
    <source>
        <dbReference type="UniProtKB" id="Q7SID5"/>
    </source>
</evidence>
<evidence type="ECO:0000255" key="4"/>
<evidence type="ECO:0000255" key="5">
    <source>
        <dbReference type="PROSITE-ProRule" id="PRU00498"/>
    </source>
</evidence>
<evidence type="ECO:0000255" key="6">
    <source>
        <dbReference type="PROSITE-ProRule" id="PRU10045"/>
    </source>
</evidence>
<evidence type="ECO:0000255" key="7">
    <source>
        <dbReference type="PROSITE-ProRule" id="PRU10046"/>
    </source>
</evidence>
<evidence type="ECO:0000305" key="8"/>
<gene>
    <name type="primary">S3</name>
</gene>
<comment type="function">
    <text>Self-incompatibility (SI) is the inherited ability of a flowering plant to prevent self-fertilization by discriminating between self and non-self pollen during pollination. In many species, self-incompatibility is controlled by the single, multiallelic locus S.</text>
</comment>
<comment type="catalytic activity">
    <reaction evidence="6 7">
        <text>a ribonucleotidyl-ribonucleotide-RNA + H2O = a 3'-end 3'-phospho-ribonucleotide-RNA + a 5'-end dephospho-ribonucleoside-RNA + H(+)</text>
        <dbReference type="Rhea" id="RHEA:68052"/>
        <dbReference type="Rhea" id="RHEA-COMP:10463"/>
        <dbReference type="Rhea" id="RHEA-COMP:13936"/>
        <dbReference type="Rhea" id="RHEA-COMP:17355"/>
        <dbReference type="ChEBI" id="CHEBI:15377"/>
        <dbReference type="ChEBI" id="CHEBI:15378"/>
        <dbReference type="ChEBI" id="CHEBI:83062"/>
        <dbReference type="ChEBI" id="CHEBI:138284"/>
        <dbReference type="ChEBI" id="CHEBI:173118"/>
        <dbReference type="EC" id="4.6.1.19"/>
    </reaction>
</comment>
<comment type="subcellular location">
    <subcellularLocation>
        <location>Secreted</location>
        <location>Extracellular space</location>
    </subcellularLocation>
</comment>
<comment type="similarity">
    <text evidence="8">Belongs to the RNase T2 family.</text>
</comment>